<name>NU2C_TRIEI</name>
<protein>
    <recommendedName>
        <fullName evidence="1">NAD(P)H-quinone oxidoreductase subunit 2</fullName>
        <ecNumber evidence="1">7.1.1.-</ecNumber>
    </recommendedName>
    <alternativeName>
        <fullName evidence="1">NAD(P)H dehydrogenase subunit 2</fullName>
    </alternativeName>
    <alternativeName>
        <fullName evidence="1">NADH-plastoquinone oxidoreductase subunit 2</fullName>
    </alternativeName>
    <alternativeName>
        <fullName evidence="1">NDH-1, subunit 2</fullName>
    </alternativeName>
</protein>
<proteinExistence type="inferred from homology"/>
<evidence type="ECO:0000255" key="1">
    <source>
        <dbReference type="HAMAP-Rule" id="MF_00445"/>
    </source>
</evidence>
<gene>
    <name evidence="1" type="primary">ndhB</name>
    <name type="ordered locus">Tery_2529</name>
</gene>
<accession>Q111U1</accession>
<organism>
    <name type="scientific">Trichodesmium erythraeum (strain IMS101)</name>
    <dbReference type="NCBI Taxonomy" id="203124"/>
    <lineage>
        <taxon>Bacteria</taxon>
        <taxon>Bacillati</taxon>
        <taxon>Cyanobacteriota</taxon>
        <taxon>Cyanophyceae</taxon>
        <taxon>Oscillatoriophycideae</taxon>
        <taxon>Oscillatoriales</taxon>
        <taxon>Microcoleaceae</taxon>
        <taxon>Trichodesmium</taxon>
    </lineage>
</organism>
<sequence length="526" mass="56002">MIDLSTIAAQLNARTILPEGIVVITLLVVLVGDLILGRSSTKWTPYAAIVGLLGAIVALYTQWDSSNTIGFLGAFNADALSIAFRGIIAISAITTILMSVAYIEQTGTPLGEFICILLTATLGAMFLSGADELVMIFISLETLSISSYLLTGYTKRDPRSNEAALKYLLIGAASSAIFLYGISLLYGLSGGETRLTAIASSMANAGSANISLALVIALVFAIAGISFKISAVPFHQWTPDVYEGSPTPVVAFLSVGSKAAGFALAIRLLVTAFPLVSEQWHFVFTALAILSMVLGNVVALAQTSMKRLLAYSSIGQAGFVMIGLLANTEAGYASMIFYLLVYLFMNLGGFTCVILFSLRTGTDQISEYAGLYQKDPLLTLGLSLCLLSLGGIPPLAGFFGKIYLFWAGWQAGLYWLVLLGLITSVASIYYYIRVVKMMVVKEPQEMSDVIKNYPPISWKLPGMRPLQVGLILSVLATSLAGILSNPLFTLANSSIAKTPMLNSALVKTVEANSVASQLDFSLPSKN</sequence>
<comment type="function">
    <text evidence="1">NDH-1 shuttles electrons from an unknown electron donor, via FMN and iron-sulfur (Fe-S) centers, to quinones in the respiratory and/or the photosynthetic chain. The immediate electron acceptor for the enzyme in this species is believed to be plastoquinone. Couples the redox reaction to proton translocation, and thus conserves the redox energy in a proton gradient. Cyanobacterial NDH-1 also plays a role in inorganic carbon-concentration.</text>
</comment>
<comment type="catalytic activity">
    <reaction evidence="1">
        <text>a plastoquinone + NADH + (n+1) H(+)(in) = a plastoquinol + NAD(+) + n H(+)(out)</text>
        <dbReference type="Rhea" id="RHEA:42608"/>
        <dbReference type="Rhea" id="RHEA-COMP:9561"/>
        <dbReference type="Rhea" id="RHEA-COMP:9562"/>
        <dbReference type="ChEBI" id="CHEBI:15378"/>
        <dbReference type="ChEBI" id="CHEBI:17757"/>
        <dbReference type="ChEBI" id="CHEBI:57540"/>
        <dbReference type="ChEBI" id="CHEBI:57945"/>
        <dbReference type="ChEBI" id="CHEBI:62192"/>
    </reaction>
</comment>
<comment type="catalytic activity">
    <reaction evidence="1">
        <text>a plastoquinone + NADPH + (n+1) H(+)(in) = a plastoquinol + NADP(+) + n H(+)(out)</text>
        <dbReference type="Rhea" id="RHEA:42612"/>
        <dbReference type="Rhea" id="RHEA-COMP:9561"/>
        <dbReference type="Rhea" id="RHEA-COMP:9562"/>
        <dbReference type="ChEBI" id="CHEBI:15378"/>
        <dbReference type="ChEBI" id="CHEBI:17757"/>
        <dbReference type="ChEBI" id="CHEBI:57783"/>
        <dbReference type="ChEBI" id="CHEBI:58349"/>
        <dbReference type="ChEBI" id="CHEBI:62192"/>
    </reaction>
</comment>
<comment type="subunit">
    <text evidence="1">NDH-1 can be composed of about 15 different subunits; different subcomplexes with different compositions have been identified which probably have different functions.</text>
</comment>
<comment type="subcellular location">
    <subcellularLocation>
        <location evidence="1">Cellular thylakoid membrane</location>
        <topology evidence="1">Multi-pass membrane protein</topology>
    </subcellularLocation>
</comment>
<comment type="similarity">
    <text evidence="1">Belongs to the complex I subunit 2 family.</text>
</comment>
<keyword id="KW-0472">Membrane</keyword>
<keyword id="KW-0520">NAD</keyword>
<keyword id="KW-0521">NADP</keyword>
<keyword id="KW-0618">Plastoquinone</keyword>
<keyword id="KW-0874">Quinone</keyword>
<keyword id="KW-0793">Thylakoid</keyword>
<keyword id="KW-1278">Translocase</keyword>
<keyword id="KW-0812">Transmembrane</keyword>
<keyword id="KW-1133">Transmembrane helix</keyword>
<keyword id="KW-0813">Transport</keyword>
<feature type="chain" id="PRO_1000026157" description="NAD(P)H-quinone oxidoreductase subunit 2">
    <location>
        <begin position="1"/>
        <end position="526"/>
    </location>
</feature>
<feature type="transmembrane region" description="Helical" evidence="1">
    <location>
        <begin position="16"/>
        <end position="36"/>
    </location>
</feature>
<feature type="transmembrane region" description="Helical" evidence="1">
    <location>
        <begin position="43"/>
        <end position="63"/>
    </location>
</feature>
<feature type="transmembrane region" description="Helical" evidence="1">
    <location>
        <begin position="80"/>
        <end position="100"/>
    </location>
</feature>
<feature type="transmembrane region" description="Helical" evidence="1">
    <location>
        <begin position="110"/>
        <end position="130"/>
    </location>
</feature>
<feature type="transmembrane region" description="Helical" evidence="1">
    <location>
        <begin position="133"/>
        <end position="153"/>
    </location>
</feature>
<feature type="transmembrane region" description="Helical" evidence="1">
    <location>
        <begin position="168"/>
        <end position="188"/>
    </location>
</feature>
<feature type="transmembrane region" description="Helical" evidence="1">
    <location>
        <begin position="212"/>
        <end position="232"/>
    </location>
</feature>
<feature type="transmembrane region" description="Helical" evidence="1">
    <location>
        <begin position="246"/>
        <end position="266"/>
    </location>
</feature>
<feature type="transmembrane region" description="Helical" evidence="1">
    <location>
        <begin position="280"/>
        <end position="300"/>
    </location>
</feature>
<feature type="transmembrane region" description="Helical" evidence="1">
    <location>
        <begin position="308"/>
        <end position="328"/>
    </location>
</feature>
<feature type="transmembrane region" description="Helical" evidence="1">
    <location>
        <begin position="336"/>
        <end position="356"/>
    </location>
</feature>
<feature type="transmembrane region" description="Helical" evidence="1">
    <location>
        <begin position="380"/>
        <end position="400"/>
    </location>
</feature>
<feature type="transmembrane region" description="Helical" evidence="1">
    <location>
        <begin position="402"/>
        <end position="422"/>
    </location>
</feature>
<feature type="transmembrane region" description="Helical" evidence="1">
    <location>
        <begin position="468"/>
        <end position="488"/>
    </location>
</feature>
<dbReference type="EC" id="7.1.1.-" evidence="1"/>
<dbReference type="EMBL" id="CP000393">
    <property type="protein sequence ID" value="ABG51733.1"/>
    <property type="molecule type" value="Genomic_DNA"/>
</dbReference>
<dbReference type="SMR" id="Q111U1"/>
<dbReference type="STRING" id="203124.Tery_2529"/>
<dbReference type="KEGG" id="ter:Tery_2529"/>
<dbReference type="eggNOG" id="COG1007">
    <property type="taxonomic scope" value="Bacteria"/>
</dbReference>
<dbReference type="HOGENOM" id="CLU_007100_1_2_3"/>
<dbReference type="GO" id="GO:0031676">
    <property type="term" value="C:plasma membrane-derived thylakoid membrane"/>
    <property type="evidence" value="ECO:0007669"/>
    <property type="project" value="UniProtKB-SubCell"/>
</dbReference>
<dbReference type="GO" id="GO:0008137">
    <property type="term" value="F:NADH dehydrogenase (ubiquinone) activity"/>
    <property type="evidence" value="ECO:0007669"/>
    <property type="project" value="InterPro"/>
</dbReference>
<dbReference type="GO" id="GO:0048038">
    <property type="term" value="F:quinone binding"/>
    <property type="evidence" value="ECO:0007669"/>
    <property type="project" value="UniProtKB-KW"/>
</dbReference>
<dbReference type="GO" id="GO:0042773">
    <property type="term" value="P:ATP synthesis coupled electron transport"/>
    <property type="evidence" value="ECO:0007669"/>
    <property type="project" value="InterPro"/>
</dbReference>
<dbReference type="GO" id="GO:0019684">
    <property type="term" value="P:photosynthesis, light reaction"/>
    <property type="evidence" value="ECO:0007669"/>
    <property type="project" value="UniProtKB-UniRule"/>
</dbReference>
<dbReference type="HAMAP" id="MF_00445">
    <property type="entry name" value="NDH1_NuoN_1"/>
    <property type="match status" value="1"/>
</dbReference>
<dbReference type="InterPro" id="IPR010096">
    <property type="entry name" value="NADH-Q_OxRdtase_suN/2"/>
</dbReference>
<dbReference type="InterPro" id="IPR001750">
    <property type="entry name" value="ND/Mrp_TM"/>
</dbReference>
<dbReference type="InterPro" id="IPR045693">
    <property type="entry name" value="Ndh2_N"/>
</dbReference>
<dbReference type="NCBIfam" id="TIGR01770">
    <property type="entry name" value="NDH_I_N"/>
    <property type="match status" value="1"/>
</dbReference>
<dbReference type="NCBIfam" id="NF002701">
    <property type="entry name" value="PRK02504.1"/>
    <property type="match status" value="1"/>
</dbReference>
<dbReference type="PANTHER" id="PTHR22773">
    <property type="entry name" value="NADH DEHYDROGENASE"/>
    <property type="match status" value="1"/>
</dbReference>
<dbReference type="Pfam" id="PF19530">
    <property type="entry name" value="Ndh2_N"/>
    <property type="match status" value="1"/>
</dbReference>
<dbReference type="Pfam" id="PF00361">
    <property type="entry name" value="Proton_antipo_M"/>
    <property type="match status" value="1"/>
</dbReference>
<reference key="1">
    <citation type="journal article" date="2015" name="Proc. Natl. Acad. Sci. U.S.A.">
        <title>Trichodesmium genome maintains abundant, widespread noncoding DNA in situ, despite oligotrophic lifestyle.</title>
        <authorList>
            <person name="Walworth N."/>
            <person name="Pfreundt U."/>
            <person name="Nelson W.C."/>
            <person name="Mincer T."/>
            <person name="Heidelberg J.F."/>
            <person name="Fu F."/>
            <person name="Waterbury J.B."/>
            <person name="Glavina del Rio T."/>
            <person name="Goodwin L."/>
            <person name="Kyrpides N.C."/>
            <person name="Land M.L."/>
            <person name="Woyke T."/>
            <person name="Hutchins D.A."/>
            <person name="Hess W.R."/>
            <person name="Webb E.A."/>
        </authorList>
    </citation>
    <scope>NUCLEOTIDE SEQUENCE [LARGE SCALE GENOMIC DNA]</scope>
    <source>
        <strain>IMS101</strain>
    </source>
</reference>